<protein>
    <recommendedName>
        <fullName evidence="1">1-(5-phosphoribosyl)-5-[(5-phosphoribosylamino)methylideneamino] imidazole-4-carboxamide isomerase</fullName>
        <ecNumber evidence="1">5.3.1.16</ecNumber>
    </recommendedName>
    <alternativeName>
        <fullName evidence="1">Phosphoribosylformimino-5-aminoimidazole carboxamide ribotide isomerase</fullName>
    </alternativeName>
</protein>
<evidence type="ECO:0000255" key="1">
    <source>
        <dbReference type="HAMAP-Rule" id="MF_01014"/>
    </source>
</evidence>
<gene>
    <name evidence="1" type="primary">hisA</name>
    <name type="ordered locus">Bcenmc03_0409</name>
</gene>
<feature type="chain" id="PRO_1000135088" description="1-(5-phosphoribosyl)-5-[(5-phosphoribosylamino)methylideneamino] imidazole-4-carboxamide isomerase">
    <location>
        <begin position="1"/>
        <end position="251"/>
    </location>
</feature>
<feature type="active site" description="Proton acceptor" evidence="1">
    <location>
        <position position="8"/>
    </location>
</feature>
<feature type="active site" description="Proton donor" evidence="1">
    <location>
        <position position="131"/>
    </location>
</feature>
<organism>
    <name type="scientific">Burkholderia orbicola (strain MC0-3)</name>
    <dbReference type="NCBI Taxonomy" id="406425"/>
    <lineage>
        <taxon>Bacteria</taxon>
        <taxon>Pseudomonadati</taxon>
        <taxon>Pseudomonadota</taxon>
        <taxon>Betaproteobacteria</taxon>
        <taxon>Burkholderiales</taxon>
        <taxon>Burkholderiaceae</taxon>
        <taxon>Burkholderia</taxon>
        <taxon>Burkholderia cepacia complex</taxon>
        <taxon>Burkholderia orbicola</taxon>
    </lineage>
</organism>
<keyword id="KW-0028">Amino-acid biosynthesis</keyword>
<keyword id="KW-0963">Cytoplasm</keyword>
<keyword id="KW-0368">Histidine biosynthesis</keyword>
<keyword id="KW-0413">Isomerase</keyword>
<name>HIS4_BURO0</name>
<dbReference type="EC" id="5.3.1.16" evidence="1"/>
<dbReference type="EMBL" id="CP000958">
    <property type="protein sequence ID" value="ACA89589.1"/>
    <property type="molecule type" value="Genomic_DNA"/>
</dbReference>
<dbReference type="RefSeq" id="WP_006477123.1">
    <property type="nucleotide sequence ID" value="NC_010508.1"/>
</dbReference>
<dbReference type="SMR" id="B1JUA4"/>
<dbReference type="GeneID" id="83047212"/>
<dbReference type="KEGG" id="bcm:Bcenmc03_0409"/>
<dbReference type="HOGENOM" id="CLU_048577_1_1_4"/>
<dbReference type="UniPathway" id="UPA00031">
    <property type="reaction ID" value="UER00009"/>
</dbReference>
<dbReference type="Proteomes" id="UP000002169">
    <property type="component" value="Chromosome 1"/>
</dbReference>
<dbReference type="GO" id="GO:0005737">
    <property type="term" value="C:cytoplasm"/>
    <property type="evidence" value="ECO:0007669"/>
    <property type="project" value="UniProtKB-SubCell"/>
</dbReference>
<dbReference type="GO" id="GO:0003949">
    <property type="term" value="F:1-(5-phosphoribosyl)-5-[(5-phosphoribosylamino)methylideneamino]imidazole-4-carboxamide isomerase activity"/>
    <property type="evidence" value="ECO:0007669"/>
    <property type="project" value="UniProtKB-UniRule"/>
</dbReference>
<dbReference type="GO" id="GO:0000105">
    <property type="term" value="P:L-histidine biosynthetic process"/>
    <property type="evidence" value="ECO:0007669"/>
    <property type="project" value="UniProtKB-UniRule"/>
</dbReference>
<dbReference type="GO" id="GO:0000162">
    <property type="term" value="P:L-tryptophan biosynthetic process"/>
    <property type="evidence" value="ECO:0007669"/>
    <property type="project" value="TreeGrafter"/>
</dbReference>
<dbReference type="CDD" id="cd04732">
    <property type="entry name" value="HisA"/>
    <property type="match status" value="1"/>
</dbReference>
<dbReference type="FunFam" id="3.20.20.70:FF:000009">
    <property type="entry name" value="1-(5-phosphoribosyl)-5-[(5-phosphoribosylamino)methylideneamino] imidazole-4-carboxamide isomerase"/>
    <property type="match status" value="1"/>
</dbReference>
<dbReference type="Gene3D" id="3.20.20.70">
    <property type="entry name" value="Aldolase class I"/>
    <property type="match status" value="1"/>
</dbReference>
<dbReference type="HAMAP" id="MF_01014">
    <property type="entry name" value="HisA"/>
    <property type="match status" value="1"/>
</dbReference>
<dbReference type="InterPro" id="IPR013785">
    <property type="entry name" value="Aldolase_TIM"/>
</dbReference>
<dbReference type="InterPro" id="IPR006062">
    <property type="entry name" value="His_biosynth"/>
</dbReference>
<dbReference type="InterPro" id="IPR006063">
    <property type="entry name" value="HisA_bact_arch"/>
</dbReference>
<dbReference type="InterPro" id="IPR044524">
    <property type="entry name" value="Isoase_HisA-like"/>
</dbReference>
<dbReference type="InterPro" id="IPR023016">
    <property type="entry name" value="Isoase_HisA-like_bact"/>
</dbReference>
<dbReference type="InterPro" id="IPR011060">
    <property type="entry name" value="RibuloseP-bd_barrel"/>
</dbReference>
<dbReference type="NCBIfam" id="TIGR00007">
    <property type="entry name" value="1-(5-phosphoribosyl)-5-[(5-phosphoribosylamino)methylideneamino]imidazole-4-carboxamide isomerase"/>
    <property type="match status" value="1"/>
</dbReference>
<dbReference type="NCBIfam" id="NF010112">
    <property type="entry name" value="PRK13585.1"/>
    <property type="match status" value="1"/>
</dbReference>
<dbReference type="PANTHER" id="PTHR43090">
    <property type="entry name" value="1-(5-PHOSPHORIBOSYL)-5-[(5-PHOSPHORIBOSYLAMINO)METHYLIDENEAMINO] IMIDAZOLE-4-CARBOXAMIDE ISOMERASE"/>
    <property type="match status" value="1"/>
</dbReference>
<dbReference type="PANTHER" id="PTHR43090:SF2">
    <property type="entry name" value="1-(5-PHOSPHORIBOSYL)-5-[(5-PHOSPHORIBOSYLAMINO)METHYLIDENEAMINO] IMIDAZOLE-4-CARBOXAMIDE ISOMERASE"/>
    <property type="match status" value="1"/>
</dbReference>
<dbReference type="Pfam" id="PF00977">
    <property type="entry name" value="His_biosynth"/>
    <property type="match status" value="1"/>
</dbReference>
<dbReference type="SUPFAM" id="SSF51366">
    <property type="entry name" value="Ribulose-phoshate binding barrel"/>
    <property type="match status" value="1"/>
</dbReference>
<sequence length="251" mass="26574">MLLIPAIDLKDGQCVRLKQGDMDQATIFSEDPAAMARKWVDLGARRLHLVDLNGAFAGKPKNLEAIEAILDEVGDEIPVQLGGGIRSLETIEKYLDAGLSYVIIGTAAVKNPGFLQDACTAFSGSIIVGLDAKDGKVATDGWSKLTGHEVIDLAKKFEDYGVESIVYTDIGRDGMLQGINIDATVKLAQAVGIPVIASGGLSNLTDIESLCEVEEHGVEGVICGRAIYSGDLDFAAAQKRADELNGELDNA</sequence>
<accession>B1JUA4</accession>
<proteinExistence type="inferred from homology"/>
<reference key="1">
    <citation type="submission" date="2008-02" db="EMBL/GenBank/DDBJ databases">
        <title>Complete sequence of chromosome 1 of Burkholderia cenocepacia MC0-3.</title>
        <authorList>
            <person name="Copeland A."/>
            <person name="Lucas S."/>
            <person name="Lapidus A."/>
            <person name="Barry K."/>
            <person name="Bruce D."/>
            <person name="Goodwin L."/>
            <person name="Glavina del Rio T."/>
            <person name="Dalin E."/>
            <person name="Tice H."/>
            <person name="Pitluck S."/>
            <person name="Chain P."/>
            <person name="Malfatti S."/>
            <person name="Shin M."/>
            <person name="Vergez L."/>
            <person name="Schmutz J."/>
            <person name="Larimer F."/>
            <person name="Land M."/>
            <person name="Hauser L."/>
            <person name="Kyrpides N."/>
            <person name="Mikhailova N."/>
            <person name="Tiedje J."/>
            <person name="Richardson P."/>
        </authorList>
    </citation>
    <scope>NUCLEOTIDE SEQUENCE [LARGE SCALE GENOMIC DNA]</scope>
    <source>
        <strain>MC0-3</strain>
    </source>
</reference>
<comment type="catalytic activity">
    <reaction evidence="1">
        <text>1-(5-phospho-beta-D-ribosyl)-5-[(5-phospho-beta-D-ribosylamino)methylideneamino]imidazole-4-carboxamide = 5-[(5-phospho-1-deoxy-D-ribulos-1-ylimino)methylamino]-1-(5-phospho-beta-D-ribosyl)imidazole-4-carboxamide</text>
        <dbReference type="Rhea" id="RHEA:15469"/>
        <dbReference type="ChEBI" id="CHEBI:58435"/>
        <dbReference type="ChEBI" id="CHEBI:58525"/>
        <dbReference type="EC" id="5.3.1.16"/>
    </reaction>
</comment>
<comment type="pathway">
    <text evidence="1">Amino-acid biosynthesis; L-histidine biosynthesis; L-histidine from 5-phospho-alpha-D-ribose 1-diphosphate: step 4/9.</text>
</comment>
<comment type="subcellular location">
    <subcellularLocation>
        <location evidence="1">Cytoplasm</location>
    </subcellularLocation>
</comment>
<comment type="similarity">
    <text evidence="1">Belongs to the HisA/HisF family.</text>
</comment>